<keyword id="KW-0274">FAD</keyword>
<keyword id="KW-0285">Flavoprotein</keyword>
<keyword id="KW-0521">NADP</keyword>
<keyword id="KW-0560">Oxidoreductase</keyword>
<keyword id="KW-1185">Reference proteome</keyword>
<dbReference type="EC" id="1.18.1.2" evidence="1"/>
<dbReference type="EMBL" id="CP000115">
    <property type="protein sequence ID" value="ABA04351.1"/>
    <property type="molecule type" value="Genomic_DNA"/>
</dbReference>
<dbReference type="RefSeq" id="WP_011314385.1">
    <property type="nucleotide sequence ID" value="NC_007406.1"/>
</dbReference>
<dbReference type="SMR" id="Q3STP0"/>
<dbReference type="STRING" id="323098.Nwi_1089"/>
<dbReference type="KEGG" id="nwi:Nwi_1089"/>
<dbReference type="eggNOG" id="COG0492">
    <property type="taxonomic scope" value="Bacteria"/>
</dbReference>
<dbReference type="HOGENOM" id="CLU_031864_5_5_5"/>
<dbReference type="OrthoDB" id="9806179at2"/>
<dbReference type="Proteomes" id="UP000002531">
    <property type="component" value="Chromosome"/>
</dbReference>
<dbReference type="GO" id="GO:0004324">
    <property type="term" value="F:ferredoxin-NADP+ reductase activity"/>
    <property type="evidence" value="ECO:0007669"/>
    <property type="project" value="UniProtKB-UniRule"/>
</dbReference>
<dbReference type="GO" id="GO:0050660">
    <property type="term" value="F:flavin adenine dinucleotide binding"/>
    <property type="evidence" value="ECO:0007669"/>
    <property type="project" value="UniProtKB-UniRule"/>
</dbReference>
<dbReference type="GO" id="GO:0050661">
    <property type="term" value="F:NADP binding"/>
    <property type="evidence" value="ECO:0007669"/>
    <property type="project" value="UniProtKB-UniRule"/>
</dbReference>
<dbReference type="Gene3D" id="3.50.50.60">
    <property type="entry name" value="FAD/NAD(P)-binding domain"/>
    <property type="match status" value="2"/>
</dbReference>
<dbReference type="HAMAP" id="MF_01685">
    <property type="entry name" value="FENR2"/>
    <property type="match status" value="1"/>
</dbReference>
<dbReference type="InterPro" id="IPR036188">
    <property type="entry name" value="FAD/NAD-bd_sf"/>
</dbReference>
<dbReference type="InterPro" id="IPR023753">
    <property type="entry name" value="FAD/NAD-binding_dom"/>
</dbReference>
<dbReference type="InterPro" id="IPR022890">
    <property type="entry name" value="Fd--NADP_Rdtase_type_2"/>
</dbReference>
<dbReference type="InterPro" id="IPR050097">
    <property type="entry name" value="Ferredoxin-NADP_redctase_2"/>
</dbReference>
<dbReference type="PANTHER" id="PTHR48105">
    <property type="entry name" value="THIOREDOXIN REDUCTASE 1-RELATED-RELATED"/>
    <property type="match status" value="1"/>
</dbReference>
<dbReference type="Pfam" id="PF07992">
    <property type="entry name" value="Pyr_redox_2"/>
    <property type="match status" value="1"/>
</dbReference>
<dbReference type="PRINTS" id="PR00368">
    <property type="entry name" value="FADPNR"/>
</dbReference>
<dbReference type="PRINTS" id="PR00469">
    <property type="entry name" value="PNDRDTASEII"/>
</dbReference>
<dbReference type="SUPFAM" id="SSF51905">
    <property type="entry name" value="FAD/NAD(P)-binding domain"/>
    <property type="match status" value="1"/>
</dbReference>
<gene>
    <name type="ordered locus">Nwi_1089</name>
</gene>
<sequence length="342" mass="37241">MSEAIKTDVLIIGAGPCGLFAVFELGLLDMKVHLVDILDKIGGQCAELYPEKPIYDIPGIPLVTGQGLTEALLEQIKPFNPTFHLNEMVESIEKIGDPGFRVTTDAGQVFECKVVVVSAGGGSFQPKRPPVPGIEAYENISVFYAVRKMEQFRDKEILIVGGGDSALDWTLNLHPLAKRITLLHRRDEFRAAPHSVEQMRKLVADGTMDLKIGQVTALEGADGKLTGAQVKGSDNTTSTVSCDTMLPFFGLTMKLGPVANWGLHLENNLIPVETASFETNVPGIFAIGDINTYPGKLKLILSGFHEGALMAQKAHRYVYPDKRLVFQYTTSSSSLQKKLGVN</sequence>
<comment type="catalytic activity">
    <reaction evidence="1">
        <text>2 reduced [2Fe-2S]-[ferredoxin] + NADP(+) + H(+) = 2 oxidized [2Fe-2S]-[ferredoxin] + NADPH</text>
        <dbReference type="Rhea" id="RHEA:20125"/>
        <dbReference type="Rhea" id="RHEA-COMP:10000"/>
        <dbReference type="Rhea" id="RHEA-COMP:10001"/>
        <dbReference type="ChEBI" id="CHEBI:15378"/>
        <dbReference type="ChEBI" id="CHEBI:33737"/>
        <dbReference type="ChEBI" id="CHEBI:33738"/>
        <dbReference type="ChEBI" id="CHEBI:57783"/>
        <dbReference type="ChEBI" id="CHEBI:58349"/>
        <dbReference type="EC" id="1.18.1.2"/>
    </reaction>
</comment>
<comment type="cofactor">
    <cofactor evidence="1">
        <name>FAD</name>
        <dbReference type="ChEBI" id="CHEBI:57692"/>
    </cofactor>
    <text evidence="1">Binds 1 FAD per subunit.</text>
</comment>
<comment type="subunit">
    <text evidence="1">Homodimer.</text>
</comment>
<comment type="similarity">
    <text evidence="1">Belongs to the ferredoxin--NADP reductase type 2 family.</text>
</comment>
<evidence type="ECO:0000255" key="1">
    <source>
        <dbReference type="HAMAP-Rule" id="MF_01685"/>
    </source>
</evidence>
<accession>Q3STP0</accession>
<name>FENR_NITWN</name>
<feature type="chain" id="PRO_0000364886" description="Ferredoxin--NADP reductase">
    <location>
        <begin position="1"/>
        <end position="342"/>
    </location>
</feature>
<feature type="binding site" evidence="1">
    <location>
        <position position="17"/>
    </location>
    <ligand>
        <name>FAD</name>
        <dbReference type="ChEBI" id="CHEBI:57692"/>
    </ligand>
</feature>
<feature type="binding site" evidence="1">
    <location>
        <position position="36"/>
    </location>
    <ligand>
        <name>FAD</name>
        <dbReference type="ChEBI" id="CHEBI:57692"/>
    </ligand>
</feature>
<feature type="binding site" evidence="1">
    <location>
        <position position="44"/>
    </location>
    <ligand>
        <name>FAD</name>
        <dbReference type="ChEBI" id="CHEBI:57692"/>
    </ligand>
</feature>
<feature type="binding site" evidence="1">
    <location>
        <position position="49"/>
    </location>
    <ligand>
        <name>FAD</name>
        <dbReference type="ChEBI" id="CHEBI:57692"/>
    </ligand>
</feature>
<feature type="binding site" evidence="1">
    <location>
        <position position="89"/>
    </location>
    <ligand>
        <name>FAD</name>
        <dbReference type="ChEBI" id="CHEBI:57692"/>
    </ligand>
</feature>
<feature type="binding site" evidence="1">
    <location>
        <position position="124"/>
    </location>
    <ligand>
        <name>FAD</name>
        <dbReference type="ChEBI" id="CHEBI:57692"/>
    </ligand>
</feature>
<feature type="binding site" evidence="1">
    <location>
        <position position="289"/>
    </location>
    <ligand>
        <name>FAD</name>
        <dbReference type="ChEBI" id="CHEBI:57692"/>
    </ligand>
</feature>
<feature type="binding site" evidence="1">
    <location>
        <position position="330"/>
    </location>
    <ligand>
        <name>FAD</name>
        <dbReference type="ChEBI" id="CHEBI:57692"/>
    </ligand>
</feature>
<proteinExistence type="inferred from homology"/>
<protein>
    <recommendedName>
        <fullName evidence="1">Ferredoxin--NADP reductase</fullName>
        <shortName evidence="1">FNR</shortName>
        <shortName evidence="1">Fd-NADP(+) reductase</shortName>
        <ecNumber evidence="1">1.18.1.2</ecNumber>
    </recommendedName>
</protein>
<organism>
    <name type="scientific">Nitrobacter winogradskyi (strain ATCC 25391 / DSM 10237 / CIP 104748 / NCIMB 11846 / Nb-255)</name>
    <dbReference type="NCBI Taxonomy" id="323098"/>
    <lineage>
        <taxon>Bacteria</taxon>
        <taxon>Pseudomonadati</taxon>
        <taxon>Pseudomonadota</taxon>
        <taxon>Alphaproteobacteria</taxon>
        <taxon>Hyphomicrobiales</taxon>
        <taxon>Nitrobacteraceae</taxon>
        <taxon>Nitrobacter</taxon>
    </lineage>
</organism>
<reference key="1">
    <citation type="journal article" date="2006" name="Appl. Environ. Microbiol.">
        <title>Genome sequence of the chemolithoautotrophic nitrite-oxidizing bacterium Nitrobacter winogradskyi Nb-255.</title>
        <authorList>
            <person name="Starkenburg S.R."/>
            <person name="Chain P.S.G."/>
            <person name="Sayavedra-Soto L.A."/>
            <person name="Hauser L."/>
            <person name="Land M.L."/>
            <person name="Larimer F.W."/>
            <person name="Malfatti S.A."/>
            <person name="Klotz M.G."/>
            <person name="Bottomley P.J."/>
            <person name="Arp D.J."/>
            <person name="Hickey W.J."/>
        </authorList>
    </citation>
    <scope>NUCLEOTIDE SEQUENCE [LARGE SCALE GENOMIC DNA]</scope>
    <source>
        <strain>ATCC 25391 / DSM 10237 / CIP 104748 / NCIMB 11846 / Nb-255</strain>
    </source>
</reference>